<gene>
    <name type="ordered locus">glr0532</name>
</gene>
<proteinExistence type="inferred from homology"/>
<keyword id="KW-0378">Hydrolase</keyword>
<keyword id="KW-0460">Magnesium</keyword>
<keyword id="KW-0479">Metal-binding</keyword>
<keyword id="KW-0546">Nucleotide metabolism</keyword>
<keyword id="KW-0547">Nucleotide-binding</keyword>
<keyword id="KW-1185">Reference proteome</keyword>
<evidence type="ECO:0000255" key="1">
    <source>
        <dbReference type="HAMAP-Rule" id="MF_01405"/>
    </source>
</evidence>
<feature type="chain" id="PRO_0000178171" description="dITP/XTP pyrophosphatase">
    <location>
        <begin position="1"/>
        <end position="195"/>
    </location>
</feature>
<feature type="active site" description="Proton acceptor" evidence="1">
    <location>
        <position position="68"/>
    </location>
</feature>
<feature type="binding site" evidence="1">
    <location>
        <begin position="9"/>
        <end position="14"/>
    </location>
    <ligand>
        <name>substrate</name>
    </ligand>
</feature>
<feature type="binding site" evidence="1">
    <location>
        <position position="39"/>
    </location>
    <ligand>
        <name>Mg(2+)</name>
        <dbReference type="ChEBI" id="CHEBI:18420"/>
    </ligand>
</feature>
<feature type="binding site" evidence="1">
    <location>
        <position position="68"/>
    </location>
    <ligand>
        <name>Mg(2+)</name>
        <dbReference type="ChEBI" id="CHEBI:18420"/>
    </ligand>
</feature>
<feature type="binding site" evidence="1">
    <location>
        <position position="69"/>
    </location>
    <ligand>
        <name>substrate</name>
    </ligand>
</feature>
<feature type="binding site" evidence="1">
    <location>
        <begin position="146"/>
        <end position="149"/>
    </location>
    <ligand>
        <name>substrate</name>
    </ligand>
</feature>
<feature type="binding site" evidence="1">
    <location>
        <position position="169"/>
    </location>
    <ligand>
        <name>substrate</name>
    </ligand>
</feature>
<feature type="binding site" evidence="1">
    <location>
        <begin position="174"/>
        <end position="175"/>
    </location>
    <ligand>
        <name>substrate</name>
    </ligand>
</feature>
<name>IXTPA_GLOVI</name>
<reference key="1">
    <citation type="journal article" date="2003" name="DNA Res.">
        <title>Complete genome structure of Gloeobacter violaceus PCC 7421, a cyanobacterium that lacks thylakoids.</title>
        <authorList>
            <person name="Nakamura Y."/>
            <person name="Kaneko T."/>
            <person name="Sato S."/>
            <person name="Mimuro M."/>
            <person name="Miyashita H."/>
            <person name="Tsuchiya T."/>
            <person name="Sasamoto S."/>
            <person name="Watanabe A."/>
            <person name="Kawashima K."/>
            <person name="Kishida Y."/>
            <person name="Kiyokawa C."/>
            <person name="Kohara M."/>
            <person name="Matsumoto M."/>
            <person name="Matsuno A."/>
            <person name="Nakazaki N."/>
            <person name="Shimpo S."/>
            <person name="Takeuchi C."/>
            <person name="Yamada M."/>
            <person name="Tabata S."/>
        </authorList>
    </citation>
    <scope>NUCLEOTIDE SEQUENCE [LARGE SCALE GENOMIC DNA]</scope>
    <source>
        <strain>ATCC 29082 / PCC 7421</strain>
    </source>
</reference>
<comment type="function">
    <text evidence="1">Pyrophosphatase that catalyzes the hydrolysis of nucleoside triphosphates to their monophosphate derivatives, with a high preference for the non-canonical purine nucleotides XTP (xanthosine triphosphate), dITP (deoxyinosine triphosphate) and ITP. Seems to function as a house-cleaning enzyme that removes non-canonical purine nucleotides from the nucleotide pool, thus preventing their incorporation into DNA/RNA and avoiding chromosomal lesions.</text>
</comment>
<comment type="catalytic activity">
    <reaction evidence="1">
        <text>XTP + H2O = XMP + diphosphate + H(+)</text>
        <dbReference type="Rhea" id="RHEA:28610"/>
        <dbReference type="ChEBI" id="CHEBI:15377"/>
        <dbReference type="ChEBI" id="CHEBI:15378"/>
        <dbReference type="ChEBI" id="CHEBI:33019"/>
        <dbReference type="ChEBI" id="CHEBI:57464"/>
        <dbReference type="ChEBI" id="CHEBI:61314"/>
        <dbReference type="EC" id="3.6.1.66"/>
    </reaction>
</comment>
<comment type="catalytic activity">
    <reaction evidence="1">
        <text>dITP + H2O = dIMP + diphosphate + H(+)</text>
        <dbReference type="Rhea" id="RHEA:28342"/>
        <dbReference type="ChEBI" id="CHEBI:15377"/>
        <dbReference type="ChEBI" id="CHEBI:15378"/>
        <dbReference type="ChEBI" id="CHEBI:33019"/>
        <dbReference type="ChEBI" id="CHEBI:61194"/>
        <dbReference type="ChEBI" id="CHEBI:61382"/>
        <dbReference type="EC" id="3.6.1.66"/>
    </reaction>
</comment>
<comment type="catalytic activity">
    <reaction evidence="1">
        <text>ITP + H2O = IMP + diphosphate + H(+)</text>
        <dbReference type="Rhea" id="RHEA:29399"/>
        <dbReference type="ChEBI" id="CHEBI:15377"/>
        <dbReference type="ChEBI" id="CHEBI:15378"/>
        <dbReference type="ChEBI" id="CHEBI:33019"/>
        <dbReference type="ChEBI" id="CHEBI:58053"/>
        <dbReference type="ChEBI" id="CHEBI:61402"/>
        <dbReference type="EC" id="3.6.1.66"/>
    </reaction>
</comment>
<comment type="cofactor">
    <cofactor evidence="1">
        <name>Mg(2+)</name>
        <dbReference type="ChEBI" id="CHEBI:18420"/>
    </cofactor>
    <text evidence="1">Binds 1 Mg(2+) ion per subunit.</text>
</comment>
<comment type="subunit">
    <text evidence="1">Homodimer.</text>
</comment>
<comment type="similarity">
    <text evidence="1">Belongs to the HAM1 NTPase family.</text>
</comment>
<dbReference type="EC" id="3.6.1.66" evidence="1"/>
<dbReference type="EMBL" id="BA000045">
    <property type="protein sequence ID" value="BAC88473.1"/>
    <property type="molecule type" value="Genomic_DNA"/>
</dbReference>
<dbReference type="RefSeq" id="NP_923478.1">
    <property type="nucleotide sequence ID" value="NC_005125.1"/>
</dbReference>
<dbReference type="RefSeq" id="WP_011140535.1">
    <property type="nucleotide sequence ID" value="NC_005125.1"/>
</dbReference>
<dbReference type="SMR" id="Q7NN81"/>
<dbReference type="FunCoup" id="Q7NN81">
    <property type="interactions" value="303"/>
</dbReference>
<dbReference type="STRING" id="251221.gene:10758005"/>
<dbReference type="EnsemblBacteria" id="BAC88473">
    <property type="protein sequence ID" value="BAC88473"/>
    <property type="gene ID" value="BAC88473"/>
</dbReference>
<dbReference type="KEGG" id="gvi:glr0532"/>
<dbReference type="PATRIC" id="fig|251221.4.peg.542"/>
<dbReference type="eggNOG" id="COG0127">
    <property type="taxonomic scope" value="Bacteria"/>
</dbReference>
<dbReference type="HOGENOM" id="CLU_082080_0_2_3"/>
<dbReference type="InParanoid" id="Q7NN81"/>
<dbReference type="OrthoDB" id="9807456at2"/>
<dbReference type="PhylomeDB" id="Q7NN81"/>
<dbReference type="Proteomes" id="UP000000557">
    <property type="component" value="Chromosome"/>
</dbReference>
<dbReference type="GO" id="GO:0005737">
    <property type="term" value="C:cytoplasm"/>
    <property type="evidence" value="ECO:0000318"/>
    <property type="project" value="GO_Central"/>
</dbReference>
<dbReference type="GO" id="GO:0005829">
    <property type="term" value="C:cytosol"/>
    <property type="evidence" value="ECO:0000318"/>
    <property type="project" value="GO_Central"/>
</dbReference>
<dbReference type="GO" id="GO:0035870">
    <property type="term" value="F:dITP diphosphatase activity"/>
    <property type="evidence" value="ECO:0007669"/>
    <property type="project" value="RHEA"/>
</dbReference>
<dbReference type="GO" id="GO:0036220">
    <property type="term" value="F:ITP diphosphatase activity"/>
    <property type="evidence" value="ECO:0007669"/>
    <property type="project" value="UniProtKB-EC"/>
</dbReference>
<dbReference type="GO" id="GO:0046872">
    <property type="term" value="F:metal ion binding"/>
    <property type="evidence" value="ECO:0007669"/>
    <property type="project" value="UniProtKB-KW"/>
</dbReference>
<dbReference type="GO" id="GO:0047429">
    <property type="term" value="F:nucleoside triphosphate diphosphatase activity"/>
    <property type="evidence" value="ECO:0000318"/>
    <property type="project" value="GO_Central"/>
</dbReference>
<dbReference type="GO" id="GO:0000166">
    <property type="term" value="F:nucleotide binding"/>
    <property type="evidence" value="ECO:0007669"/>
    <property type="project" value="UniProtKB-KW"/>
</dbReference>
<dbReference type="GO" id="GO:0017111">
    <property type="term" value="F:ribonucleoside triphosphate phosphatase activity"/>
    <property type="evidence" value="ECO:0007669"/>
    <property type="project" value="InterPro"/>
</dbReference>
<dbReference type="GO" id="GO:0036222">
    <property type="term" value="F:XTP diphosphatase activity"/>
    <property type="evidence" value="ECO:0007669"/>
    <property type="project" value="RHEA"/>
</dbReference>
<dbReference type="GO" id="GO:0009143">
    <property type="term" value="P:nucleoside triphosphate catabolic process"/>
    <property type="evidence" value="ECO:0000318"/>
    <property type="project" value="GO_Central"/>
</dbReference>
<dbReference type="GO" id="GO:0009117">
    <property type="term" value="P:nucleotide metabolic process"/>
    <property type="evidence" value="ECO:0007669"/>
    <property type="project" value="UniProtKB-KW"/>
</dbReference>
<dbReference type="GO" id="GO:0009146">
    <property type="term" value="P:purine nucleoside triphosphate catabolic process"/>
    <property type="evidence" value="ECO:0007669"/>
    <property type="project" value="UniProtKB-UniRule"/>
</dbReference>
<dbReference type="CDD" id="cd00515">
    <property type="entry name" value="HAM1"/>
    <property type="match status" value="1"/>
</dbReference>
<dbReference type="FunFam" id="3.90.950.10:FF:000001">
    <property type="entry name" value="dITP/XTP pyrophosphatase"/>
    <property type="match status" value="1"/>
</dbReference>
<dbReference type="Gene3D" id="3.90.950.10">
    <property type="match status" value="1"/>
</dbReference>
<dbReference type="HAMAP" id="MF_01405">
    <property type="entry name" value="Non_canon_purine_NTPase"/>
    <property type="match status" value="1"/>
</dbReference>
<dbReference type="InterPro" id="IPR020922">
    <property type="entry name" value="dITP/XTP_pyrophosphatase"/>
</dbReference>
<dbReference type="InterPro" id="IPR029001">
    <property type="entry name" value="ITPase-like_fam"/>
</dbReference>
<dbReference type="InterPro" id="IPR002637">
    <property type="entry name" value="RdgB/HAM1"/>
</dbReference>
<dbReference type="NCBIfam" id="TIGR00042">
    <property type="entry name" value="RdgB/HAM1 family non-canonical purine NTP pyrophosphatase"/>
    <property type="match status" value="1"/>
</dbReference>
<dbReference type="PANTHER" id="PTHR11067:SF9">
    <property type="entry name" value="INOSINE TRIPHOSPHATE PYROPHOSPHATASE"/>
    <property type="match status" value="1"/>
</dbReference>
<dbReference type="PANTHER" id="PTHR11067">
    <property type="entry name" value="INOSINE TRIPHOSPHATE PYROPHOSPHATASE/HAM1 PROTEIN"/>
    <property type="match status" value="1"/>
</dbReference>
<dbReference type="Pfam" id="PF01725">
    <property type="entry name" value="Ham1p_like"/>
    <property type="match status" value="1"/>
</dbReference>
<dbReference type="SUPFAM" id="SSF52972">
    <property type="entry name" value="ITPase-like"/>
    <property type="match status" value="1"/>
</dbReference>
<accession>Q7NN81</accession>
<protein>
    <recommendedName>
        <fullName evidence="1">dITP/XTP pyrophosphatase</fullName>
        <ecNumber evidence="1">3.6.1.66</ecNumber>
    </recommendedName>
    <alternativeName>
        <fullName evidence="1">Non-canonical purine NTP pyrophosphatase</fullName>
    </alternativeName>
    <alternativeName>
        <fullName evidence="1">Non-standard purine NTP pyrophosphatase</fullName>
    </alternativeName>
    <alternativeName>
        <fullName evidence="1">Nucleoside-triphosphate diphosphatase</fullName>
    </alternativeName>
    <alternativeName>
        <fullName evidence="1">Nucleoside-triphosphate pyrophosphatase</fullName>
        <shortName evidence="1">NTPase</shortName>
    </alternativeName>
</protein>
<sequence>MMRFLILATNNQGKLQELRRLLAGTGWVVQAAPPDFAVEETGTTFAENARLKALAAAERTGEWSVGDDSGLAVDALGGAPGVYSARYGRNDGERISRLLAALAGQADRGARFICAIALAEPGRVLKEVEAECRGVILHAPRGNGGFGYDPIFLVPELDKTFAELDIVEKERHSHRGRAVRKLLSGCSRGTFIVDH</sequence>
<organism>
    <name type="scientific">Gloeobacter violaceus (strain ATCC 29082 / PCC 7421)</name>
    <dbReference type="NCBI Taxonomy" id="251221"/>
    <lineage>
        <taxon>Bacteria</taxon>
        <taxon>Bacillati</taxon>
        <taxon>Cyanobacteriota</taxon>
        <taxon>Cyanophyceae</taxon>
        <taxon>Gloeobacterales</taxon>
        <taxon>Gloeobacteraceae</taxon>
        <taxon>Gloeobacter</taxon>
    </lineage>
</organism>